<comment type="function">
    <text evidence="1">Catalyzes the proton-dependent transport of sialic acid.</text>
</comment>
<comment type="catalytic activity">
    <reaction evidence="1">
        <text>N-acetylneuraminate(in) + H(+)(in) = N-acetylneuraminate(out) + H(+)(out)</text>
        <dbReference type="Rhea" id="RHEA:28987"/>
        <dbReference type="ChEBI" id="CHEBI:15378"/>
        <dbReference type="ChEBI" id="CHEBI:35418"/>
    </reaction>
</comment>
<comment type="subcellular location">
    <subcellularLocation>
        <location evidence="1">Cell inner membrane</location>
        <topology evidence="1">Multi-pass membrane protein</topology>
    </subcellularLocation>
</comment>
<comment type="similarity">
    <text evidence="1">Belongs to the major facilitator superfamily. Sialate:H(+) symporter (SHS) (TC 2.A.1.12) family.</text>
</comment>
<gene>
    <name evidence="1" type="primary">nanT</name>
    <name type="ordered locus">YPDSF_2123</name>
</gene>
<proteinExistence type="inferred from homology"/>
<evidence type="ECO:0000255" key="1">
    <source>
        <dbReference type="HAMAP-Rule" id="MF_01238"/>
    </source>
</evidence>
<organism>
    <name type="scientific">Yersinia pestis (strain Pestoides F)</name>
    <dbReference type="NCBI Taxonomy" id="386656"/>
    <lineage>
        <taxon>Bacteria</taxon>
        <taxon>Pseudomonadati</taxon>
        <taxon>Pseudomonadota</taxon>
        <taxon>Gammaproteobacteria</taxon>
        <taxon>Enterobacterales</taxon>
        <taxon>Yersiniaceae</taxon>
        <taxon>Yersinia</taxon>
    </lineage>
</organism>
<accession>A4TMJ0</accession>
<name>NANT_YERPP</name>
<reference key="1">
    <citation type="submission" date="2007-02" db="EMBL/GenBank/DDBJ databases">
        <title>Complete sequence of chromosome of Yersinia pestis Pestoides F.</title>
        <authorList>
            <consortium name="US DOE Joint Genome Institute"/>
            <person name="Copeland A."/>
            <person name="Lucas S."/>
            <person name="Lapidus A."/>
            <person name="Barry K."/>
            <person name="Detter J.C."/>
            <person name="Glavina del Rio T."/>
            <person name="Hammon N."/>
            <person name="Israni S."/>
            <person name="Dalin E."/>
            <person name="Tice H."/>
            <person name="Pitluck S."/>
            <person name="Di Bartolo G."/>
            <person name="Chain P."/>
            <person name="Malfatti S."/>
            <person name="Shin M."/>
            <person name="Vergez L."/>
            <person name="Schmutz J."/>
            <person name="Larimer F."/>
            <person name="Land M."/>
            <person name="Hauser L."/>
            <person name="Worsham P."/>
            <person name="Chu M."/>
            <person name="Bearden S."/>
            <person name="Garcia E."/>
            <person name="Richardson P."/>
        </authorList>
    </citation>
    <scope>NUCLEOTIDE SEQUENCE [LARGE SCALE GENOMIC DNA]</scope>
    <source>
        <strain>Pestoides F</strain>
    </source>
</reference>
<keyword id="KW-0997">Cell inner membrane</keyword>
<keyword id="KW-1003">Cell membrane</keyword>
<keyword id="KW-0472">Membrane</keyword>
<keyword id="KW-0762">Sugar transport</keyword>
<keyword id="KW-0812">Transmembrane</keyword>
<keyword id="KW-1133">Transmembrane helix</keyword>
<keyword id="KW-0813">Transport</keyword>
<dbReference type="EMBL" id="CP000668">
    <property type="protein sequence ID" value="ABP40502.1"/>
    <property type="molecule type" value="Genomic_DNA"/>
</dbReference>
<dbReference type="RefSeq" id="WP_011906318.1">
    <property type="nucleotide sequence ID" value="NZ_CP009715.1"/>
</dbReference>
<dbReference type="SMR" id="A4TMJ0"/>
<dbReference type="KEGG" id="ypp:YPDSF_2123"/>
<dbReference type="PATRIC" id="fig|386656.14.peg.3600"/>
<dbReference type="GO" id="GO:0005886">
    <property type="term" value="C:plasma membrane"/>
    <property type="evidence" value="ECO:0007669"/>
    <property type="project" value="UniProtKB-SubCell"/>
</dbReference>
<dbReference type="GO" id="GO:0046943">
    <property type="term" value="F:carboxylic acid transmembrane transporter activity"/>
    <property type="evidence" value="ECO:0007669"/>
    <property type="project" value="TreeGrafter"/>
</dbReference>
<dbReference type="GO" id="GO:0015538">
    <property type="term" value="F:sialic acid:proton symporter activity"/>
    <property type="evidence" value="ECO:0007669"/>
    <property type="project" value="UniProtKB-UniRule"/>
</dbReference>
<dbReference type="CDD" id="cd17316">
    <property type="entry name" value="MFS_SV2_like"/>
    <property type="match status" value="1"/>
</dbReference>
<dbReference type="FunFam" id="1.20.1250.20:FF:000027">
    <property type="entry name" value="Sialic acid transporter NanT"/>
    <property type="match status" value="1"/>
</dbReference>
<dbReference type="FunFam" id="1.20.1250.20:FF:000038">
    <property type="entry name" value="Sialic acid transporter NanT"/>
    <property type="match status" value="1"/>
</dbReference>
<dbReference type="Gene3D" id="1.20.1250.20">
    <property type="entry name" value="MFS general substrate transporter like domains"/>
    <property type="match status" value="2"/>
</dbReference>
<dbReference type="HAMAP" id="MF_01238">
    <property type="entry name" value="MFS_NanT"/>
    <property type="match status" value="1"/>
</dbReference>
<dbReference type="InterPro" id="IPR011701">
    <property type="entry name" value="MFS"/>
</dbReference>
<dbReference type="InterPro" id="IPR020846">
    <property type="entry name" value="MFS_dom"/>
</dbReference>
<dbReference type="InterPro" id="IPR036259">
    <property type="entry name" value="MFS_trans_sf"/>
</dbReference>
<dbReference type="InterPro" id="IPR004742">
    <property type="entry name" value="SA_transporter"/>
</dbReference>
<dbReference type="NCBIfam" id="NF003024">
    <property type="entry name" value="PRK03893.1"/>
    <property type="match status" value="1"/>
</dbReference>
<dbReference type="PANTHER" id="PTHR23508">
    <property type="entry name" value="CARBOXYLIC ACID TRANSPORTER PROTEIN HOMOLOG"/>
    <property type="match status" value="1"/>
</dbReference>
<dbReference type="PANTHER" id="PTHR23508:SF3">
    <property type="entry name" value="SIALIC ACID TRANSPORTER NANT"/>
    <property type="match status" value="1"/>
</dbReference>
<dbReference type="Pfam" id="PF07690">
    <property type="entry name" value="MFS_1"/>
    <property type="match status" value="1"/>
</dbReference>
<dbReference type="SUPFAM" id="SSF103473">
    <property type="entry name" value="MFS general substrate transporter"/>
    <property type="match status" value="1"/>
</dbReference>
<dbReference type="PROSITE" id="PS50850">
    <property type="entry name" value="MFS"/>
    <property type="match status" value="1"/>
</dbReference>
<feature type="chain" id="PRO_1000214074" description="Sialic acid transporter NanT">
    <location>
        <begin position="1"/>
        <end position="510"/>
    </location>
</feature>
<feature type="transmembrane region" description="Helical" evidence="1">
    <location>
        <begin position="35"/>
        <end position="55"/>
    </location>
</feature>
<feature type="transmembrane region" description="Helical" evidence="1">
    <location>
        <begin position="72"/>
        <end position="92"/>
    </location>
</feature>
<feature type="transmembrane region" description="Helical" evidence="1">
    <location>
        <begin position="99"/>
        <end position="119"/>
    </location>
</feature>
<feature type="transmembrane region" description="Helical" evidence="1">
    <location>
        <begin position="120"/>
        <end position="140"/>
    </location>
</feature>
<feature type="transmembrane region" description="Helical" evidence="1">
    <location>
        <begin position="161"/>
        <end position="181"/>
    </location>
</feature>
<feature type="transmembrane region" description="Helical" evidence="1">
    <location>
        <begin position="183"/>
        <end position="203"/>
    </location>
</feature>
<feature type="transmembrane region" description="Helical" evidence="1">
    <location>
        <begin position="240"/>
        <end position="260"/>
    </location>
</feature>
<feature type="transmembrane region" description="Helical" evidence="1">
    <location>
        <begin position="262"/>
        <end position="282"/>
    </location>
</feature>
<feature type="transmembrane region" description="Helical" evidence="1">
    <location>
        <begin position="295"/>
        <end position="315"/>
    </location>
</feature>
<feature type="transmembrane region" description="Helical" evidence="1">
    <location>
        <begin position="330"/>
        <end position="350"/>
    </location>
</feature>
<feature type="transmembrane region" description="Helical" evidence="1">
    <location>
        <begin position="371"/>
        <end position="391"/>
    </location>
</feature>
<feature type="transmembrane region" description="Helical" evidence="1">
    <location>
        <begin position="392"/>
        <end position="412"/>
    </location>
</feature>
<feature type="transmembrane region" description="Helical" evidence="1">
    <location>
        <begin position="418"/>
        <end position="438"/>
    </location>
</feature>
<feature type="transmembrane region" description="Helical" evidence="1">
    <location>
        <begin position="449"/>
        <end position="469"/>
    </location>
</feature>
<protein>
    <recommendedName>
        <fullName evidence="1">Sialic acid transporter NanT</fullName>
    </recommendedName>
    <alternativeName>
        <fullName evidence="1">Sialic acid permease</fullName>
    </alternativeName>
    <alternativeName>
        <fullName evidence="1">Sialic acid/H(+) symporter</fullName>
    </alternativeName>
</protein>
<sequence length="510" mass="55290">MSISVGPSREDKPLSGGAKPPRWYKQLTPAQWKAFVAAWIGYALDGFDFVLITLVLTDIKQEFGLTLIQATSLISAAFISRWFGGLVLGAMGDRYGRKLAMITSIVLFSFGTLACGLAPGYTTLFIARLIIGIGMAGEYGSSSTYVMESWPKNMRNKASGFLISGFSIGAVLAAQAYSYVVPAFGWRMLFYIGLLPIIFALWLRKNLPEAEDWEKAQSKQKKGKQVTDRNMVDILYRSHLSYLNIGLTIFAVVSLYLCFTGMVSTLLVVVLGILCAAIFIYFMVQTSGDRWPTGVMLMVVVFCAFLYSWPIQALLPTYLKMDLGYDPHTVGNILFFSGFGAAVGCCVGGFLGDWLGTRKAYVTSLLISQLLIIPLFAIQGSSILFLGGLLFLQQMLGQGIAGLLPKLLGGYFDTEQRAAGLGFTYNVGALGGALAPILGASIAQHLSLGTALGSLSFSLTFVVILLIGFDMPSRVQRWVRPSGLRMVDAIDGKPFSGAITAQHARVVTQK</sequence>